<reference key="1">
    <citation type="submission" date="1998-09" db="EMBL/GenBank/DDBJ databases">
        <title>Structure and function study of ribulose-1,5-bisphosphate carboxylase/oxygenase of the marine diatom, Detonula confervacea.</title>
        <authorList>
            <person name="Tomizawa K."/>
        </authorList>
    </citation>
    <scope>NUCLEOTIDE SEQUENCE [GENOMIC DNA]</scope>
</reference>
<gene>
    <name evidence="1" type="primary">rbcS</name>
</gene>
<protein>
    <recommendedName>
        <fullName evidence="1">Ribulose bisphosphate carboxylase small subunit</fullName>
        <shortName evidence="1">RuBisCO small subunit</shortName>
    </recommendedName>
</protein>
<organism>
    <name type="scientific">Detonula confervacea</name>
    <name type="common">Marine diatom</name>
    <dbReference type="NCBI Taxonomy" id="83371"/>
    <lineage>
        <taxon>Eukaryota</taxon>
        <taxon>Sar</taxon>
        <taxon>Stramenopiles</taxon>
        <taxon>Ochrophyta</taxon>
        <taxon>Bacillariophyta</taxon>
        <taxon>Coscinodiscophyceae</taxon>
        <taxon>Thalassiosirophycidae</taxon>
        <taxon>Thalassiosirales</taxon>
        <taxon>Thalassiosiraceae</taxon>
        <taxon>Detonula</taxon>
    </lineage>
</organism>
<accession>O98946</accession>
<comment type="function">
    <text evidence="1">RuBisCO catalyzes two reactions: the carboxylation of D-ribulose 1,5-bisphosphate, the primary event in carbon dioxide fixation, as well as the oxidative fragmentation of the pentose substrate in the photorespiration process. Both reactions occur simultaneously and in competition at the same active site. Although the small subunit is not catalytic it is essential for maximal activity.</text>
</comment>
<comment type="subunit">
    <text evidence="1">Heterohexadecamer of 8 large and 8 small subunits.</text>
</comment>
<comment type="subcellular location">
    <subcellularLocation>
        <location evidence="1">Plastid</location>
        <location evidence="1">Chloroplast</location>
    </subcellularLocation>
</comment>
<comment type="miscellaneous">
    <text>In this alga, in contrast to plants, the small subunit is encoded in the chloroplast.</text>
</comment>
<comment type="miscellaneous">
    <text evidence="1">The basic functional RuBisCO is composed of a large chain homodimer in a 'head-to-tail' conformation. In form I RuBisCO this homodimer is arranged in a barrel-like tetramer with the small subunits forming a tetrameric 'cap' on each end of the 'barrel'.</text>
</comment>
<comment type="similarity">
    <text evidence="1">Belongs to the RuBisCO small chain family.</text>
</comment>
<proteinExistence type="inferred from homology"/>
<feature type="chain" id="PRO_0000198596" description="Ribulose bisphosphate carboxylase small subunit">
    <location>
        <begin position="1"/>
        <end position="139"/>
    </location>
</feature>
<geneLocation type="chloroplast"/>
<keyword id="KW-0113">Calvin cycle</keyword>
<keyword id="KW-0120">Carbon dioxide fixation</keyword>
<keyword id="KW-0150">Chloroplast</keyword>
<keyword id="KW-0601">Photorespiration</keyword>
<keyword id="KW-0602">Photosynthesis</keyword>
<keyword id="KW-0934">Plastid</keyword>
<sequence length="139" mass="15813">MRLTQGCFSFLPDLTDEQIEKQVACAMSRGLAMNVEWTDDPHPRNNYWELWGLPLFDIKDPATVMFELNEARKSCAAGYIRMNAFDASYGTESCVMSFITNRPVSEPGFYLDRTEGVGRQIVYSIKSYSVQANPEGSRY</sequence>
<evidence type="ECO:0000255" key="1">
    <source>
        <dbReference type="HAMAP-Rule" id="MF_00859"/>
    </source>
</evidence>
<name>RBS_DETCO</name>
<dbReference type="EMBL" id="AB018006">
    <property type="protein sequence ID" value="BAA75793.1"/>
    <property type="molecule type" value="Genomic_DNA"/>
</dbReference>
<dbReference type="SMR" id="O98946"/>
<dbReference type="GO" id="GO:0009507">
    <property type="term" value="C:chloroplast"/>
    <property type="evidence" value="ECO:0007669"/>
    <property type="project" value="UniProtKB-SubCell"/>
</dbReference>
<dbReference type="GO" id="GO:0016984">
    <property type="term" value="F:ribulose-bisphosphate carboxylase activity"/>
    <property type="evidence" value="ECO:0007669"/>
    <property type="project" value="UniProtKB-UniRule"/>
</dbReference>
<dbReference type="GO" id="GO:0019253">
    <property type="term" value="P:reductive pentose-phosphate cycle"/>
    <property type="evidence" value="ECO:0007669"/>
    <property type="project" value="UniProtKB-UniRule"/>
</dbReference>
<dbReference type="CDD" id="cd03527">
    <property type="entry name" value="RuBisCO_small"/>
    <property type="match status" value="1"/>
</dbReference>
<dbReference type="Gene3D" id="3.30.190.10">
    <property type="entry name" value="Ribulose bisphosphate carboxylase, small subunit"/>
    <property type="match status" value="1"/>
</dbReference>
<dbReference type="HAMAP" id="MF_00859">
    <property type="entry name" value="RuBisCO_S_bact"/>
    <property type="match status" value="1"/>
</dbReference>
<dbReference type="InterPro" id="IPR024681">
    <property type="entry name" value="RuBisCO_ssu"/>
</dbReference>
<dbReference type="InterPro" id="IPR000894">
    <property type="entry name" value="RuBisCO_ssu_dom"/>
</dbReference>
<dbReference type="InterPro" id="IPR036385">
    <property type="entry name" value="RuBisCO_ssu_sf"/>
</dbReference>
<dbReference type="PANTHER" id="PTHR31262">
    <property type="entry name" value="RIBULOSE BISPHOSPHATE CARBOXYLASE SMALL CHAIN 1, CHLOROPLASTIC"/>
    <property type="match status" value="1"/>
</dbReference>
<dbReference type="PANTHER" id="PTHR31262:SF23">
    <property type="entry name" value="RIBULOSE BISPHOSPHATE CARBOXYLASE SMALL SUBUNIT"/>
    <property type="match status" value="1"/>
</dbReference>
<dbReference type="Pfam" id="PF00101">
    <property type="entry name" value="RuBisCO_small"/>
    <property type="match status" value="1"/>
</dbReference>
<dbReference type="SMART" id="SM00961">
    <property type="entry name" value="RuBisCO_small"/>
    <property type="match status" value="1"/>
</dbReference>
<dbReference type="SUPFAM" id="SSF55239">
    <property type="entry name" value="RuBisCO, small subunit"/>
    <property type="match status" value="1"/>
</dbReference>